<name>YQGF_BACAH</name>
<accession>A0RIZ9</accession>
<keyword id="KW-0963">Cytoplasm</keyword>
<keyword id="KW-0378">Hydrolase</keyword>
<keyword id="KW-0540">Nuclease</keyword>
<keyword id="KW-0690">Ribosome biogenesis</keyword>
<comment type="function">
    <text evidence="1">Could be a nuclease involved in processing of the 5'-end of pre-16S rRNA.</text>
</comment>
<comment type="subcellular location">
    <subcellularLocation>
        <location evidence="1">Cytoplasm</location>
    </subcellularLocation>
</comment>
<comment type="similarity">
    <text evidence="1">Belongs to the YqgF nuclease family.</text>
</comment>
<sequence length="137" mass="15296">MRILGLDVGTKTVGVAISDEMGWTAQGLETIKINEERGQFGFDRISELVKQYDVDKIVVGLPKNMNGTIGPRGEACQQFAENLRELLQLDVVMWDERLSTMAAERLLISADVSRKKRKQVIDKMAAVVILQGFLDSK</sequence>
<gene>
    <name type="ordered locus">BALH_3971</name>
</gene>
<reference key="1">
    <citation type="journal article" date="2007" name="J. Bacteriol.">
        <title>The complete genome sequence of Bacillus thuringiensis Al Hakam.</title>
        <authorList>
            <person name="Challacombe J.F."/>
            <person name="Altherr M.R."/>
            <person name="Xie G."/>
            <person name="Bhotika S.S."/>
            <person name="Brown N."/>
            <person name="Bruce D."/>
            <person name="Campbell C.S."/>
            <person name="Campbell M.L."/>
            <person name="Chen J."/>
            <person name="Chertkov O."/>
            <person name="Cleland C."/>
            <person name="Dimitrijevic M."/>
            <person name="Doggett N.A."/>
            <person name="Fawcett J.J."/>
            <person name="Glavina T."/>
            <person name="Goodwin L.A."/>
            <person name="Green L.D."/>
            <person name="Han C.S."/>
            <person name="Hill K.K."/>
            <person name="Hitchcock P."/>
            <person name="Jackson P.J."/>
            <person name="Keim P."/>
            <person name="Kewalramani A.R."/>
            <person name="Longmire J."/>
            <person name="Lucas S."/>
            <person name="Malfatti S."/>
            <person name="Martinez D."/>
            <person name="McMurry K."/>
            <person name="Meincke L.J."/>
            <person name="Misra M."/>
            <person name="Moseman B.L."/>
            <person name="Mundt M."/>
            <person name="Munk A.C."/>
            <person name="Okinaka R.T."/>
            <person name="Parson-Quintana B."/>
            <person name="Reilly L.P."/>
            <person name="Richardson P."/>
            <person name="Robinson D.L."/>
            <person name="Saunders E."/>
            <person name="Tapia R."/>
            <person name="Tesmer J.G."/>
            <person name="Thayer N."/>
            <person name="Thompson L.S."/>
            <person name="Tice H."/>
            <person name="Ticknor L.O."/>
            <person name="Wills P.L."/>
            <person name="Gilna P."/>
            <person name="Brettin T.S."/>
        </authorList>
    </citation>
    <scope>NUCLEOTIDE SEQUENCE [LARGE SCALE GENOMIC DNA]</scope>
    <source>
        <strain>Al Hakam</strain>
    </source>
</reference>
<proteinExistence type="inferred from homology"/>
<feature type="chain" id="PRO_1000061483" description="Putative pre-16S rRNA nuclease">
    <location>
        <begin position="1"/>
        <end position="137"/>
    </location>
</feature>
<organism>
    <name type="scientific">Bacillus thuringiensis (strain Al Hakam)</name>
    <dbReference type="NCBI Taxonomy" id="412694"/>
    <lineage>
        <taxon>Bacteria</taxon>
        <taxon>Bacillati</taxon>
        <taxon>Bacillota</taxon>
        <taxon>Bacilli</taxon>
        <taxon>Bacillales</taxon>
        <taxon>Bacillaceae</taxon>
        <taxon>Bacillus</taxon>
        <taxon>Bacillus cereus group</taxon>
    </lineage>
</organism>
<evidence type="ECO:0000255" key="1">
    <source>
        <dbReference type="HAMAP-Rule" id="MF_00651"/>
    </source>
</evidence>
<dbReference type="EC" id="3.1.-.-" evidence="1"/>
<dbReference type="EMBL" id="CP000485">
    <property type="protein sequence ID" value="ABK87192.1"/>
    <property type="molecule type" value="Genomic_DNA"/>
</dbReference>
<dbReference type="SMR" id="A0RIZ9"/>
<dbReference type="KEGG" id="btl:BALH_3971"/>
<dbReference type="HOGENOM" id="CLU_098240_2_0_9"/>
<dbReference type="GO" id="GO:0005829">
    <property type="term" value="C:cytosol"/>
    <property type="evidence" value="ECO:0007669"/>
    <property type="project" value="TreeGrafter"/>
</dbReference>
<dbReference type="GO" id="GO:0004518">
    <property type="term" value="F:nuclease activity"/>
    <property type="evidence" value="ECO:0007669"/>
    <property type="project" value="UniProtKB-KW"/>
</dbReference>
<dbReference type="GO" id="GO:0000967">
    <property type="term" value="P:rRNA 5'-end processing"/>
    <property type="evidence" value="ECO:0007669"/>
    <property type="project" value="UniProtKB-UniRule"/>
</dbReference>
<dbReference type="CDD" id="cd16964">
    <property type="entry name" value="YqgF"/>
    <property type="match status" value="1"/>
</dbReference>
<dbReference type="FunFam" id="3.30.420.140:FF:000003">
    <property type="entry name" value="Putative pre-16S rRNA nuclease"/>
    <property type="match status" value="1"/>
</dbReference>
<dbReference type="Gene3D" id="3.30.420.140">
    <property type="entry name" value="YqgF/RNase H-like domain"/>
    <property type="match status" value="1"/>
</dbReference>
<dbReference type="HAMAP" id="MF_00651">
    <property type="entry name" value="Nuclease_YqgF"/>
    <property type="match status" value="1"/>
</dbReference>
<dbReference type="InterPro" id="IPR012337">
    <property type="entry name" value="RNaseH-like_sf"/>
</dbReference>
<dbReference type="InterPro" id="IPR005227">
    <property type="entry name" value="YqgF"/>
</dbReference>
<dbReference type="InterPro" id="IPR006641">
    <property type="entry name" value="YqgF/RNaseH-like_dom"/>
</dbReference>
<dbReference type="InterPro" id="IPR037027">
    <property type="entry name" value="YqgF/RNaseH-like_dom_sf"/>
</dbReference>
<dbReference type="NCBIfam" id="TIGR00250">
    <property type="entry name" value="RNAse_H_YqgF"/>
    <property type="match status" value="1"/>
</dbReference>
<dbReference type="PANTHER" id="PTHR33317">
    <property type="entry name" value="POLYNUCLEOTIDYL TRANSFERASE, RIBONUCLEASE H-LIKE SUPERFAMILY PROTEIN"/>
    <property type="match status" value="1"/>
</dbReference>
<dbReference type="PANTHER" id="PTHR33317:SF4">
    <property type="entry name" value="POLYNUCLEOTIDYL TRANSFERASE, RIBONUCLEASE H-LIKE SUPERFAMILY PROTEIN"/>
    <property type="match status" value="1"/>
</dbReference>
<dbReference type="Pfam" id="PF03652">
    <property type="entry name" value="RuvX"/>
    <property type="match status" value="1"/>
</dbReference>
<dbReference type="SMART" id="SM00732">
    <property type="entry name" value="YqgFc"/>
    <property type="match status" value="1"/>
</dbReference>
<dbReference type="SUPFAM" id="SSF53098">
    <property type="entry name" value="Ribonuclease H-like"/>
    <property type="match status" value="1"/>
</dbReference>
<protein>
    <recommendedName>
        <fullName evidence="1">Putative pre-16S rRNA nuclease</fullName>
        <ecNumber evidence="1">3.1.-.-</ecNumber>
    </recommendedName>
</protein>